<name>GUAA_ALKEH</name>
<organism>
    <name type="scientific">Alkalilimnicola ehrlichii (strain ATCC BAA-1101 / DSM 17681 / MLHE-1)</name>
    <dbReference type="NCBI Taxonomy" id="187272"/>
    <lineage>
        <taxon>Bacteria</taxon>
        <taxon>Pseudomonadati</taxon>
        <taxon>Pseudomonadota</taxon>
        <taxon>Gammaproteobacteria</taxon>
        <taxon>Chromatiales</taxon>
        <taxon>Ectothiorhodospiraceae</taxon>
        <taxon>Alkalilimnicola</taxon>
    </lineage>
</organism>
<evidence type="ECO:0000255" key="1">
    <source>
        <dbReference type="HAMAP-Rule" id="MF_00344"/>
    </source>
</evidence>
<protein>
    <recommendedName>
        <fullName evidence="1">GMP synthase [glutamine-hydrolyzing]</fullName>
        <ecNumber evidence="1">6.3.5.2</ecNumber>
    </recommendedName>
    <alternativeName>
        <fullName evidence="1">GMP synthetase</fullName>
    </alternativeName>
    <alternativeName>
        <fullName evidence="1">Glutamine amidotransferase</fullName>
    </alternativeName>
</protein>
<feature type="chain" id="PRO_1000120206" description="GMP synthase [glutamine-hydrolyzing]">
    <location>
        <begin position="1"/>
        <end position="525"/>
    </location>
</feature>
<feature type="domain" description="Glutamine amidotransferase type-1" evidence="1">
    <location>
        <begin position="9"/>
        <end position="207"/>
    </location>
</feature>
<feature type="domain" description="GMPS ATP-PPase" evidence="1">
    <location>
        <begin position="208"/>
        <end position="400"/>
    </location>
</feature>
<feature type="active site" description="Nucleophile" evidence="1">
    <location>
        <position position="86"/>
    </location>
</feature>
<feature type="active site" evidence="1">
    <location>
        <position position="181"/>
    </location>
</feature>
<feature type="active site" evidence="1">
    <location>
        <position position="183"/>
    </location>
</feature>
<feature type="binding site" evidence="1">
    <location>
        <begin position="235"/>
        <end position="241"/>
    </location>
    <ligand>
        <name>ATP</name>
        <dbReference type="ChEBI" id="CHEBI:30616"/>
    </ligand>
</feature>
<accession>Q0A9W8</accession>
<sequence>MTQDIHAHRILILDFGSQYTQLIARRVREAGVYCEIYAWDAPETAIRDFGAAGFILSGGPESMTVDNGPRVPEAVFQAGVPVLGICYGMQAMAGQLGGRVEASDHKEFGYARVRARGHSRLLRDIEDHASPEGWGLLDVWMSHGDRVTGLPPGFKLIASTESCPIAGIGDDERGYYGVQFHPEVTHTPQGARILSRFVHEICGCPADWTPGNIVDDLIERVRRQVGGDKVLLGLSGGVDSSVVAALLHRAIGDQLTCVFVDNGLLRKDEGDQVMATFARHMGVNVIRVDAEARFLEALKGVDDPERKRKIIGNMFIEVFDEQAARLTEVDWLAQGTIYPDVIESAGSATGKAHVIKSHHNVGGLPEDMTLKLVEPLRELFKDEVRRIGLELGLPADMVYRHPFPGPGLGVRILGEVRKEYADLLREADAIFIEELRAHDLYDQVSQAFAVFLPVKSVGVTGDGRRYEYVVALRAVETIDFMTARWAHLPYEFLDHVSRRIINEIPGISRVAYDISGKPPATIEWE</sequence>
<proteinExistence type="inferred from homology"/>
<keyword id="KW-0067">ATP-binding</keyword>
<keyword id="KW-0315">Glutamine amidotransferase</keyword>
<keyword id="KW-0332">GMP biosynthesis</keyword>
<keyword id="KW-0436">Ligase</keyword>
<keyword id="KW-0547">Nucleotide-binding</keyword>
<keyword id="KW-0658">Purine biosynthesis</keyword>
<keyword id="KW-1185">Reference proteome</keyword>
<reference key="1">
    <citation type="submission" date="2006-08" db="EMBL/GenBank/DDBJ databases">
        <title>Complete sequence of Alkalilimnicola ehrilichei MLHE-1.</title>
        <authorList>
            <person name="Copeland A."/>
            <person name="Lucas S."/>
            <person name="Lapidus A."/>
            <person name="Barry K."/>
            <person name="Detter J.C."/>
            <person name="Glavina del Rio T."/>
            <person name="Hammon N."/>
            <person name="Israni S."/>
            <person name="Dalin E."/>
            <person name="Tice H."/>
            <person name="Pitluck S."/>
            <person name="Sims D."/>
            <person name="Brettin T."/>
            <person name="Bruce D."/>
            <person name="Han C."/>
            <person name="Tapia R."/>
            <person name="Gilna P."/>
            <person name="Schmutz J."/>
            <person name="Larimer F."/>
            <person name="Land M."/>
            <person name="Hauser L."/>
            <person name="Kyrpides N."/>
            <person name="Mikhailova N."/>
            <person name="Oremland R.S."/>
            <person name="Hoeft S.E."/>
            <person name="Switzer-Blum J."/>
            <person name="Kulp T."/>
            <person name="King G."/>
            <person name="Tabita R."/>
            <person name="Witte B."/>
            <person name="Santini J.M."/>
            <person name="Basu P."/>
            <person name="Hollibaugh J.T."/>
            <person name="Xie G."/>
            <person name="Stolz J.F."/>
            <person name="Richardson P."/>
        </authorList>
    </citation>
    <scope>NUCLEOTIDE SEQUENCE [LARGE SCALE GENOMIC DNA]</scope>
    <source>
        <strain>ATCC BAA-1101 / DSM 17681 / MLHE-1</strain>
    </source>
</reference>
<gene>
    <name evidence="1" type="primary">guaA</name>
    <name type="ordered locus">Mlg_1016</name>
</gene>
<comment type="function">
    <text evidence="1">Catalyzes the synthesis of GMP from XMP.</text>
</comment>
<comment type="catalytic activity">
    <reaction evidence="1">
        <text>XMP + L-glutamine + ATP + H2O = GMP + L-glutamate + AMP + diphosphate + 2 H(+)</text>
        <dbReference type="Rhea" id="RHEA:11680"/>
        <dbReference type="ChEBI" id="CHEBI:15377"/>
        <dbReference type="ChEBI" id="CHEBI:15378"/>
        <dbReference type="ChEBI" id="CHEBI:29985"/>
        <dbReference type="ChEBI" id="CHEBI:30616"/>
        <dbReference type="ChEBI" id="CHEBI:33019"/>
        <dbReference type="ChEBI" id="CHEBI:57464"/>
        <dbReference type="ChEBI" id="CHEBI:58115"/>
        <dbReference type="ChEBI" id="CHEBI:58359"/>
        <dbReference type="ChEBI" id="CHEBI:456215"/>
        <dbReference type="EC" id="6.3.5.2"/>
    </reaction>
</comment>
<comment type="pathway">
    <text evidence="1">Purine metabolism; GMP biosynthesis; GMP from XMP (L-Gln route): step 1/1.</text>
</comment>
<comment type="subunit">
    <text evidence="1">Homodimer.</text>
</comment>
<dbReference type="EC" id="6.3.5.2" evidence="1"/>
<dbReference type="EMBL" id="CP000453">
    <property type="protein sequence ID" value="ABI56369.1"/>
    <property type="molecule type" value="Genomic_DNA"/>
</dbReference>
<dbReference type="RefSeq" id="WP_011628764.1">
    <property type="nucleotide sequence ID" value="NC_008340.1"/>
</dbReference>
<dbReference type="SMR" id="Q0A9W8"/>
<dbReference type="MEROPS" id="C26.957"/>
<dbReference type="KEGG" id="aeh:Mlg_1016"/>
<dbReference type="eggNOG" id="COG0518">
    <property type="taxonomic scope" value="Bacteria"/>
</dbReference>
<dbReference type="eggNOG" id="COG0519">
    <property type="taxonomic scope" value="Bacteria"/>
</dbReference>
<dbReference type="HOGENOM" id="CLU_014340_0_5_6"/>
<dbReference type="OrthoDB" id="9802219at2"/>
<dbReference type="UniPathway" id="UPA00189">
    <property type="reaction ID" value="UER00296"/>
</dbReference>
<dbReference type="Proteomes" id="UP000001962">
    <property type="component" value="Chromosome"/>
</dbReference>
<dbReference type="GO" id="GO:0005829">
    <property type="term" value="C:cytosol"/>
    <property type="evidence" value="ECO:0007669"/>
    <property type="project" value="TreeGrafter"/>
</dbReference>
<dbReference type="GO" id="GO:0005524">
    <property type="term" value="F:ATP binding"/>
    <property type="evidence" value="ECO:0007669"/>
    <property type="project" value="UniProtKB-UniRule"/>
</dbReference>
<dbReference type="GO" id="GO:0003921">
    <property type="term" value="F:GMP synthase activity"/>
    <property type="evidence" value="ECO:0007669"/>
    <property type="project" value="InterPro"/>
</dbReference>
<dbReference type="CDD" id="cd01742">
    <property type="entry name" value="GATase1_GMP_Synthase"/>
    <property type="match status" value="1"/>
</dbReference>
<dbReference type="CDD" id="cd01997">
    <property type="entry name" value="GMP_synthase_C"/>
    <property type="match status" value="1"/>
</dbReference>
<dbReference type="FunFam" id="3.30.300.10:FF:000002">
    <property type="entry name" value="GMP synthase [glutamine-hydrolyzing]"/>
    <property type="match status" value="1"/>
</dbReference>
<dbReference type="FunFam" id="3.40.50.620:FF:000001">
    <property type="entry name" value="GMP synthase [glutamine-hydrolyzing]"/>
    <property type="match status" value="1"/>
</dbReference>
<dbReference type="FunFam" id="3.40.50.880:FF:000001">
    <property type="entry name" value="GMP synthase [glutamine-hydrolyzing]"/>
    <property type="match status" value="1"/>
</dbReference>
<dbReference type="Gene3D" id="3.30.300.10">
    <property type="match status" value="1"/>
</dbReference>
<dbReference type="Gene3D" id="3.40.50.880">
    <property type="match status" value="1"/>
</dbReference>
<dbReference type="Gene3D" id="3.40.50.620">
    <property type="entry name" value="HUPs"/>
    <property type="match status" value="1"/>
</dbReference>
<dbReference type="HAMAP" id="MF_00344">
    <property type="entry name" value="GMP_synthase"/>
    <property type="match status" value="1"/>
</dbReference>
<dbReference type="InterPro" id="IPR029062">
    <property type="entry name" value="Class_I_gatase-like"/>
</dbReference>
<dbReference type="InterPro" id="IPR017926">
    <property type="entry name" value="GATASE"/>
</dbReference>
<dbReference type="InterPro" id="IPR001674">
    <property type="entry name" value="GMP_synth_C"/>
</dbReference>
<dbReference type="InterPro" id="IPR004739">
    <property type="entry name" value="GMP_synth_GATase"/>
</dbReference>
<dbReference type="InterPro" id="IPR022955">
    <property type="entry name" value="GMP_synthase"/>
</dbReference>
<dbReference type="InterPro" id="IPR025777">
    <property type="entry name" value="GMPS_ATP_PPase_dom"/>
</dbReference>
<dbReference type="InterPro" id="IPR022310">
    <property type="entry name" value="NAD/GMP_synthase"/>
</dbReference>
<dbReference type="InterPro" id="IPR014729">
    <property type="entry name" value="Rossmann-like_a/b/a_fold"/>
</dbReference>
<dbReference type="NCBIfam" id="TIGR00884">
    <property type="entry name" value="guaA_Cterm"/>
    <property type="match status" value="1"/>
</dbReference>
<dbReference type="NCBIfam" id="TIGR00888">
    <property type="entry name" value="guaA_Nterm"/>
    <property type="match status" value="1"/>
</dbReference>
<dbReference type="NCBIfam" id="NF000848">
    <property type="entry name" value="PRK00074.1"/>
    <property type="match status" value="1"/>
</dbReference>
<dbReference type="PANTHER" id="PTHR11922:SF2">
    <property type="entry name" value="GMP SYNTHASE [GLUTAMINE-HYDROLYZING]"/>
    <property type="match status" value="1"/>
</dbReference>
<dbReference type="PANTHER" id="PTHR11922">
    <property type="entry name" value="GMP SYNTHASE-RELATED"/>
    <property type="match status" value="1"/>
</dbReference>
<dbReference type="Pfam" id="PF00117">
    <property type="entry name" value="GATase"/>
    <property type="match status" value="1"/>
</dbReference>
<dbReference type="Pfam" id="PF00958">
    <property type="entry name" value="GMP_synt_C"/>
    <property type="match status" value="1"/>
</dbReference>
<dbReference type="Pfam" id="PF02540">
    <property type="entry name" value="NAD_synthase"/>
    <property type="match status" value="1"/>
</dbReference>
<dbReference type="PRINTS" id="PR00096">
    <property type="entry name" value="GATASE"/>
</dbReference>
<dbReference type="SUPFAM" id="SSF52402">
    <property type="entry name" value="Adenine nucleotide alpha hydrolases-like"/>
    <property type="match status" value="1"/>
</dbReference>
<dbReference type="SUPFAM" id="SSF52317">
    <property type="entry name" value="Class I glutamine amidotransferase-like"/>
    <property type="match status" value="1"/>
</dbReference>
<dbReference type="SUPFAM" id="SSF54810">
    <property type="entry name" value="GMP synthetase C-terminal dimerisation domain"/>
    <property type="match status" value="1"/>
</dbReference>
<dbReference type="PROSITE" id="PS51273">
    <property type="entry name" value="GATASE_TYPE_1"/>
    <property type="match status" value="1"/>
</dbReference>
<dbReference type="PROSITE" id="PS51553">
    <property type="entry name" value="GMPS_ATP_PPASE"/>
    <property type="match status" value="1"/>
</dbReference>